<accession>Q1C5B1</accession>
<keyword id="KW-0143">Chaperone</keyword>
<keyword id="KW-0963">Cytoplasm</keyword>
<keyword id="KW-0996">Nickel insertion</keyword>
<name>UREF_YERPA</name>
<evidence type="ECO:0000255" key="1">
    <source>
        <dbReference type="HAMAP-Rule" id="MF_01385"/>
    </source>
</evidence>
<proteinExistence type="inferred from homology"/>
<sequence>MNASDLIRIMQFGDSVLPVGAFTFSNGVESAIQTGIVHDVATLKGFVLTALKQAASCDGMGVVVAHRAVVADDRDGIIRADWAVNNRKLNEESRLMATRMGKKLAEMSIHVVEHPLISWWLEQIKNGNTAGTYPVTQAVVMAAQGIGQREVVVMHQYGVAMTILSAAMRLMRVTHFDTQHILFELNHDIEKFCDIAEIGDINQMSSYVPIVDVLAAVHVKAHVRLFSN</sequence>
<organism>
    <name type="scientific">Yersinia pestis bv. Antiqua (strain Antiqua)</name>
    <dbReference type="NCBI Taxonomy" id="360102"/>
    <lineage>
        <taxon>Bacteria</taxon>
        <taxon>Pseudomonadati</taxon>
        <taxon>Pseudomonadota</taxon>
        <taxon>Gammaproteobacteria</taxon>
        <taxon>Enterobacterales</taxon>
        <taxon>Yersiniaceae</taxon>
        <taxon>Yersinia</taxon>
    </lineage>
</organism>
<reference key="1">
    <citation type="journal article" date="2006" name="J. Bacteriol.">
        <title>Complete genome sequence of Yersinia pestis strains Antiqua and Nepal516: evidence of gene reduction in an emerging pathogen.</title>
        <authorList>
            <person name="Chain P.S.G."/>
            <person name="Hu P."/>
            <person name="Malfatti S.A."/>
            <person name="Radnedge L."/>
            <person name="Larimer F."/>
            <person name="Vergez L.M."/>
            <person name="Worsham P."/>
            <person name="Chu M.C."/>
            <person name="Andersen G.L."/>
        </authorList>
    </citation>
    <scope>NUCLEOTIDE SEQUENCE [LARGE SCALE GENOMIC DNA]</scope>
    <source>
        <strain>Antiqua</strain>
    </source>
</reference>
<comment type="function">
    <text evidence="1">Required for maturation of urease via the functional incorporation of the urease nickel metallocenter.</text>
</comment>
<comment type="subunit">
    <text evidence="1">UreD, UreF and UreG form a complex that acts as a GTP-hydrolysis-dependent molecular chaperone, activating the urease apoprotein by helping to assemble the nickel containing metallocenter of UreC. The UreE protein probably delivers the nickel.</text>
</comment>
<comment type="subcellular location">
    <subcellularLocation>
        <location evidence="1">Cytoplasm</location>
    </subcellularLocation>
</comment>
<comment type="similarity">
    <text evidence="1">Belongs to the UreF family.</text>
</comment>
<feature type="chain" id="PRO_1000145147" description="Urease accessory protein UreF">
    <location>
        <begin position="1"/>
        <end position="228"/>
    </location>
</feature>
<dbReference type="EMBL" id="CP000308">
    <property type="protein sequence ID" value="ABG14361.1"/>
    <property type="molecule type" value="Genomic_DNA"/>
</dbReference>
<dbReference type="RefSeq" id="WP_002212231.1">
    <property type="nucleotide sequence ID" value="NZ_CP009906.1"/>
</dbReference>
<dbReference type="SMR" id="Q1C5B1"/>
<dbReference type="KEGG" id="ypa:YPA_2396"/>
<dbReference type="Proteomes" id="UP000001971">
    <property type="component" value="Chromosome"/>
</dbReference>
<dbReference type="GO" id="GO:0005737">
    <property type="term" value="C:cytoplasm"/>
    <property type="evidence" value="ECO:0007669"/>
    <property type="project" value="UniProtKB-SubCell"/>
</dbReference>
<dbReference type="GO" id="GO:0016151">
    <property type="term" value="F:nickel cation binding"/>
    <property type="evidence" value="ECO:0007669"/>
    <property type="project" value="UniProtKB-UniRule"/>
</dbReference>
<dbReference type="Gene3D" id="1.10.4190.10">
    <property type="entry name" value="Urease accessory protein UreF"/>
    <property type="match status" value="1"/>
</dbReference>
<dbReference type="HAMAP" id="MF_01385">
    <property type="entry name" value="UreF"/>
    <property type="match status" value="1"/>
</dbReference>
<dbReference type="InterPro" id="IPR002639">
    <property type="entry name" value="UreF"/>
</dbReference>
<dbReference type="InterPro" id="IPR038277">
    <property type="entry name" value="UreF_sf"/>
</dbReference>
<dbReference type="PANTHER" id="PTHR33620">
    <property type="entry name" value="UREASE ACCESSORY PROTEIN F"/>
    <property type="match status" value="1"/>
</dbReference>
<dbReference type="PANTHER" id="PTHR33620:SF1">
    <property type="entry name" value="UREASE ACCESSORY PROTEIN F"/>
    <property type="match status" value="1"/>
</dbReference>
<dbReference type="Pfam" id="PF01730">
    <property type="entry name" value="UreF"/>
    <property type="match status" value="1"/>
</dbReference>
<dbReference type="PIRSF" id="PIRSF009467">
    <property type="entry name" value="Ureas_acces_UreF"/>
    <property type="match status" value="1"/>
</dbReference>
<gene>
    <name evidence="1" type="primary">ureF</name>
    <name type="ordered locus">YPA_2396</name>
</gene>
<protein>
    <recommendedName>
        <fullName evidence="1">Urease accessory protein UreF</fullName>
    </recommendedName>
</protein>